<accession>P06344</accession>
<name>HB2U_MOUSE</name>
<dbReference type="PIR" id="A02239">
    <property type="entry name" value="HLMSBU"/>
</dbReference>
<dbReference type="PDB" id="1K2D">
    <property type="method" value="X-ray"/>
    <property type="resolution" value="2.20 A"/>
    <property type="chains" value="B=28-216"/>
</dbReference>
<dbReference type="PDB" id="1U3H">
    <property type="method" value="X-ray"/>
    <property type="resolution" value="2.42 A"/>
    <property type="chains" value="D/H=28-215"/>
</dbReference>
<dbReference type="PDB" id="2P24">
    <property type="method" value="X-ray"/>
    <property type="resolution" value="2.15 A"/>
    <property type="chains" value="B=28-224"/>
</dbReference>
<dbReference type="PDB" id="2PXY">
    <property type="method" value="X-ray"/>
    <property type="resolution" value="2.23 A"/>
    <property type="chains" value="D=29-217"/>
</dbReference>
<dbReference type="PDB" id="2Z31">
    <property type="method" value="X-ray"/>
    <property type="resolution" value="2.70 A"/>
    <property type="chains" value="D=28-216"/>
</dbReference>
<dbReference type="PDBsum" id="1K2D"/>
<dbReference type="PDBsum" id="1U3H"/>
<dbReference type="PDBsum" id="2P24"/>
<dbReference type="PDBsum" id="2PXY"/>
<dbReference type="PDBsum" id="2Z31"/>
<dbReference type="SMR" id="P06344"/>
<dbReference type="FunCoup" id="P06344">
    <property type="interactions" value="78"/>
</dbReference>
<dbReference type="MINT" id="P06344"/>
<dbReference type="GlyGen" id="P06344">
    <property type="glycosylation" value="1 site"/>
</dbReference>
<dbReference type="jPOST" id="P06344"/>
<dbReference type="InParanoid" id="P06344"/>
<dbReference type="EvolutionaryTrace" id="P06344"/>
<dbReference type="Proteomes" id="UP000000589">
    <property type="component" value="Unplaced"/>
</dbReference>
<dbReference type="RNAct" id="P06344">
    <property type="molecule type" value="protein"/>
</dbReference>
<dbReference type="GO" id="GO:0009986">
    <property type="term" value="C:cell surface"/>
    <property type="evidence" value="ECO:0007669"/>
    <property type="project" value="UniProtKB-ARBA"/>
</dbReference>
<dbReference type="GO" id="GO:0005769">
    <property type="term" value="C:early endosome"/>
    <property type="evidence" value="ECO:0007669"/>
    <property type="project" value="UniProtKB-ARBA"/>
</dbReference>
<dbReference type="GO" id="GO:0005794">
    <property type="term" value="C:Golgi apparatus"/>
    <property type="evidence" value="ECO:0007669"/>
    <property type="project" value="UniProtKB-ARBA"/>
</dbReference>
<dbReference type="GO" id="GO:0031902">
    <property type="term" value="C:late endosome membrane"/>
    <property type="evidence" value="ECO:0000318"/>
    <property type="project" value="GO_Central"/>
</dbReference>
<dbReference type="GO" id="GO:0005765">
    <property type="term" value="C:lysosomal membrane"/>
    <property type="evidence" value="ECO:0000318"/>
    <property type="project" value="GO_Central"/>
</dbReference>
<dbReference type="GO" id="GO:0042613">
    <property type="term" value="C:MHC class II protein complex"/>
    <property type="evidence" value="ECO:0000318"/>
    <property type="project" value="GO_Central"/>
</dbReference>
<dbReference type="GO" id="GO:0005771">
    <property type="term" value="C:multivesicular body"/>
    <property type="evidence" value="ECO:0007669"/>
    <property type="project" value="UniProtKB-ARBA"/>
</dbReference>
<dbReference type="GO" id="GO:0023026">
    <property type="term" value="F:MHC class II protein complex binding"/>
    <property type="evidence" value="ECO:0000318"/>
    <property type="project" value="GO_Central"/>
</dbReference>
<dbReference type="GO" id="GO:0042605">
    <property type="term" value="F:peptide antigen binding"/>
    <property type="evidence" value="ECO:0000318"/>
    <property type="project" value="GO_Central"/>
</dbReference>
<dbReference type="GO" id="GO:0002250">
    <property type="term" value="P:adaptive immune response"/>
    <property type="evidence" value="ECO:0007669"/>
    <property type="project" value="UniProtKB-KW"/>
</dbReference>
<dbReference type="GO" id="GO:0019886">
    <property type="term" value="P:antigen processing and presentation of exogenous peptide antigen via MHC class II"/>
    <property type="evidence" value="ECO:0000318"/>
    <property type="project" value="GO_Central"/>
</dbReference>
<dbReference type="GO" id="GO:0002503">
    <property type="term" value="P:peptide antigen assembly with MHC class II protein complex"/>
    <property type="evidence" value="ECO:0000318"/>
    <property type="project" value="GO_Central"/>
</dbReference>
<dbReference type="GO" id="GO:0050778">
    <property type="term" value="P:positive regulation of immune response"/>
    <property type="evidence" value="ECO:0000318"/>
    <property type="project" value="GO_Central"/>
</dbReference>
<dbReference type="GO" id="GO:0050870">
    <property type="term" value="P:positive regulation of T cell activation"/>
    <property type="evidence" value="ECO:0000318"/>
    <property type="project" value="GO_Central"/>
</dbReference>
<dbReference type="CDD" id="cd21001">
    <property type="entry name" value="IgC1_MHC_II_beta_HLA-DQ_I-A"/>
    <property type="match status" value="1"/>
</dbReference>
<dbReference type="FunFam" id="2.60.40.10:FF:000116">
    <property type="entry name" value="HLA class II histocompatibility antigen, DRB1-1 beta chain"/>
    <property type="match status" value="1"/>
</dbReference>
<dbReference type="FunFam" id="3.10.320.10:FF:000001">
    <property type="entry name" value="HLA class II histocompatibility antigen, DRB1-1 beta chain"/>
    <property type="match status" value="1"/>
</dbReference>
<dbReference type="Gene3D" id="3.10.320.10">
    <property type="entry name" value="Class II Histocompatibility Antigen, M Beta Chain, Chain B, domain 1"/>
    <property type="match status" value="1"/>
</dbReference>
<dbReference type="Gene3D" id="2.60.40.10">
    <property type="entry name" value="Immunoglobulins"/>
    <property type="match status" value="1"/>
</dbReference>
<dbReference type="InterPro" id="IPR007110">
    <property type="entry name" value="Ig-like_dom"/>
</dbReference>
<dbReference type="InterPro" id="IPR036179">
    <property type="entry name" value="Ig-like_dom_sf"/>
</dbReference>
<dbReference type="InterPro" id="IPR013783">
    <property type="entry name" value="Ig-like_fold"/>
</dbReference>
<dbReference type="InterPro" id="IPR003006">
    <property type="entry name" value="Ig/MHC_CS"/>
</dbReference>
<dbReference type="InterPro" id="IPR003597">
    <property type="entry name" value="Ig_C1-set"/>
</dbReference>
<dbReference type="InterPro" id="IPR050160">
    <property type="entry name" value="MHC/Immunoglobulin"/>
</dbReference>
<dbReference type="InterPro" id="IPR011162">
    <property type="entry name" value="MHC_I/II-like_Ag-recog"/>
</dbReference>
<dbReference type="InterPro" id="IPR014745">
    <property type="entry name" value="MHC_II_a/b_N"/>
</dbReference>
<dbReference type="InterPro" id="IPR000353">
    <property type="entry name" value="MHC_II_b_N"/>
</dbReference>
<dbReference type="PANTHER" id="PTHR19944:SF101">
    <property type="entry name" value="HLA CLASS II HISTOCOMPATIBILITY ANTIGEN, DQ BETA 1 CHAIN"/>
    <property type="match status" value="1"/>
</dbReference>
<dbReference type="PANTHER" id="PTHR19944">
    <property type="entry name" value="MHC CLASS II-RELATED"/>
    <property type="match status" value="1"/>
</dbReference>
<dbReference type="Pfam" id="PF07654">
    <property type="entry name" value="C1-set"/>
    <property type="match status" value="1"/>
</dbReference>
<dbReference type="Pfam" id="PF00969">
    <property type="entry name" value="MHC_II_beta"/>
    <property type="match status" value="1"/>
</dbReference>
<dbReference type="SMART" id="SM00407">
    <property type="entry name" value="IGc1"/>
    <property type="match status" value="1"/>
</dbReference>
<dbReference type="SMART" id="SM00921">
    <property type="entry name" value="MHC_II_beta"/>
    <property type="match status" value="1"/>
</dbReference>
<dbReference type="SUPFAM" id="SSF48726">
    <property type="entry name" value="Immunoglobulin"/>
    <property type="match status" value="1"/>
</dbReference>
<dbReference type="SUPFAM" id="SSF54452">
    <property type="entry name" value="MHC antigen-recognition domain"/>
    <property type="match status" value="1"/>
</dbReference>
<dbReference type="PROSITE" id="PS50835">
    <property type="entry name" value="IG_LIKE"/>
    <property type="match status" value="1"/>
</dbReference>
<dbReference type="PROSITE" id="PS00290">
    <property type="entry name" value="IG_MHC"/>
    <property type="match status" value="1"/>
</dbReference>
<organism>
    <name type="scientific">Mus musculus</name>
    <name type="common">Mouse</name>
    <dbReference type="NCBI Taxonomy" id="10090"/>
    <lineage>
        <taxon>Eukaryota</taxon>
        <taxon>Metazoa</taxon>
        <taxon>Chordata</taxon>
        <taxon>Craniata</taxon>
        <taxon>Vertebrata</taxon>
        <taxon>Euteleostomi</taxon>
        <taxon>Mammalia</taxon>
        <taxon>Eutheria</taxon>
        <taxon>Euarchontoglires</taxon>
        <taxon>Glires</taxon>
        <taxon>Rodentia</taxon>
        <taxon>Myomorpha</taxon>
        <taxon>Muroidea</taxon>
        <taxon>Muridae</taxon>
        <taxon>Murinae</taxon>
        <taxon>Mus</taxon>
        <taxon>Mus</taxon>
    </lineage>
</organism>
<keyword id="KW-0002">3D-structure</keyword>
<keyword id="KW-1064">Adaptive immunity</keyword>
<keyword id="KW-1015">Disulfide bond</keyword>
<keyword id="KW-0325">Glycoprotein</keyword>
<keyword id="KW-0391">Immunity</keyword>
<keyword id="KW-0472">Membrane</keyword>
<keyword id="KW-0491">MHC II</keyword>
<keyword id="KW-1185">Reference proteome</keyword>
<keyword id="KW-0732">Signal</keyword>
<keyword id="KW-0812">Transmembrane</keyword>
<keyword id="KW-1133">Transmembrane helix</keyword>
<evidence type="ECO:0000255" key="1"/>
<evidence type="ECO:0000255" key="2">
    <source>
        <dbReference type="PROSITE-ProRule" id="PRU00114"/>
    </source>
</evidence>
<evidence type="ECO:0000305" key="3"/>
<evidence type="ECO:0007829" key="4">
    <source>
        <dbReference type="PDB" id="1K2D"/>
    </source>
</evidence>
<evidence type="ECO:0007829" key="5">
    <source>
        <dbReference type="PDB" id="2P24"/>
    </source>
</evidence>
<comment type="subcellular location">
    <subcellularLocation>
        <location evidence="3">Membrane</location>
        <topology evidence="3">Single-pass type I membrane protein</topology>
    </subcellularLocation>
</comment>
<comment type="similarity">
    <text evidence="3">Belongs to the MHC class II family.</text>
</comment>
<protein>
    <recommendedName>
        <fullName>H-2 class II histocompatibility antigen, A-U beta chain</fullName>
    </recommendedName>
</protein>
<reference key="1">
    <citation type="journal article" date="1986" name="Proc. Natl. Acad. Sci. U.S.A.">
        <title>Sequence analysis and structure-function correlations of murine q, k, u, s, and f haplotype I-A beta cDNA clones.</title>
        <authorList>
            <person name="Estess P."/>
            <person name="Begovich A.B."/>
            <person name="Koo M."/>
            <person name="Jones P.P."/>
            <person name="McDevitt H.O."/>
        </authorList>
    </citation>
    <scope>NUCLEOTIDE SEQUENCE</scope>
</reference>
<reference key="2">
    <citation type="journal article" date="1987" name="Immunol. Invest.">
        <title>Comparative sequence analysis of cDNA clones encoding I-A molecules of the CH12 B cell lymphoma: nucleotide differences do not account for their 'defective' function in B cell stimulation.</title>
        <authorList>
            <person name="Sharma S."/>
            <person name="King L.B."/>
            <person name="Corley R.B."/>
            <person name="Maki R."/>
        </authorList>
    </citation>
    <scope>NUCLEOTIDE SEQUENCE OF 174-263</scope>
</reference>
<feature type="signal peptide">
    <location>
        <begin position="1"/>
        <end position="27"/>
    </location>
</feature>
<feature type="chain" id="PRO_0000018999" description="H-2 class II histocompatibility antigen, A-U beta chain">
    <location>
        <begin position="28"/>
        <end position="263"/>
    </location>
</feature>
<feature type="topological domain" description="Extracellular" evidence="1">
    <location>
        <begin position="28"/>
        <end position="224"/>
    </location>
</feature>
<feature type="transmembrane region" description="Helical" evidence="1">
    <location>
        <begin position="225"/>
        <end position="245"/>
    </location>
</feature>
<feature type="topological domain" description="Cytoplasmic" evidence="1">
    <location>
        <begin position="246"/>
        <end position="263"/>
    </location>
</feature>
<feature type="domain" description="Ig-like C1-type">
    <location>
        <begin position="123"/>
        <end position="211"/>
    </location>
</feature>
<feature type="region of interest" description="Beta-1">
    <location>
        <begin position="28"/>
        <end position="120"/>
    </location>
</feature>
<feature type="region of interest" description="Beta-2">
    <location>
        <begin position="121"/>
        <end position="214"/>
    </location>
</feature>
<feature type="region of interest" description="Connecting peptide">
    <location>
        <begin position="215"/>
        <end position="224"/>
    </location>
</feature>
<feature type="glycosylation site" description="N-linked (GlcNAc...) asparagine" evidence="1">
    <location>
        <position position="46"/>
    </location>
</feature>
<feature type="disulfide bond" evidence="2">
    <location>
        <begin position="42"/>
        <end position="104"/>
    </location>
</feature>
<feature type="disulfide bond" evidence="2">
    <location>
        <begin position="143"/>
        <end position="199"/>
    </location>
</feature>
<feature type="strand" evidence="5">
    <location>
        <begin position="34"/>
        <end position="45"/>
    </location>
</feature>
<feature type="turn" evidence="5">
    <location>
        <begin position="46"/>
        <end position="49"/>
    </location>
</feature>
<feature type="strand" evidence="5">
    <location>
        <begin position="50"/>
        <end position="59"/>
    </location>
</feature>
<feature type="strand" evidence="5">
    <location>
        <begin position="62"/>
        <end position="68"/>
    </location>
</feature>
<feature type="turn" evidence="5">
    <location>
        <begin position="69"/>
        <end position="71"/>
    </location>
</feature>
<feature type="strand" evidence="5">
    <location>
        <begin position="73"/>
        <end position="78"/>
    </location>
</feature>
<feature type="helix" evidence="5">
    <location>
        <begin position="79"/>
        <end position="81"/>
    </location>
</feature>
<feature type="turn" evidence="5">
    <location>
        <begin position="82"/>
        <end position="84"/>
    </location>
</feature>
<feature type="helix" evidence="5">
    <location>
        <begin position="85"/>
        <end position="91"/>
    </location>
</feature>
<feature type="helix" evidence="5">
    <location>
        <begin position="93"/>
        <end position="102"/>
    </location>
</feature>
<feature type="helix" evidence="5">
    <location>
        <begin position="104"/>
        <end position="111"/>
    </location>
</feature>
<feature type="turn" evidence="5">
    <location>
        <begin position="112"/>
        <end position="118"/>
    </location>
</feature>
<feature type="strand" evidence="5">
    <location>
        <begin position="124"/>
        <end position="129"/>
    </location>
</feature>
<feature type="strand" evidence="4">
    <location>
        <begin position="135"/>
        <end position="137"/>
    </location>
</feature>
<feature type="strand" evidence="5">
    <location>
        <begin position="140"/>
        <end position="151"/>
    </location>
</feature>
<feature type="strand" evidence="5">
    <location>
        <begin position="154"/>
        <end position="159"/>
    </location>
</feature>
<feature type="strand" evidence="5">
    <location>
        <begin position="162"/>
        <end position="164"/>
    </location>
</feature>
<feature type="strand" evidence="5">
    <location>
        <begin position="168"/>
        <end position="170"/>
    </location>
</feature>
<feature type="strand" evidence="5">
    <location>
        <begin position="177"/>
        <end position="179"/>
    </location>
</feature>
<feature type="strand" evidence="5">
    <location>
        <begin position="181"/>
        <end position="188"/>
    </location>
</feature>
<feature type="strand" evidence="5">
    <location>
        <begin position="196"/>
        <end position="202"/>
    </location>
</feature>
<feature type="strand" evidence="5">
    <location>
        <begin position="210"/>
        <end position="215"/>
    </location>
</feature>
<feature type="turn" evidence="5">
    <location>
        <begin position="216"/>
        <end position="218"/>
    </location>
</feature>
<sequence length="263" mass="30041">MALQIPSLLLLAAVVVLMVLSSPGTEGGDSERHFVVQFQPFCYFTNGTQRIRYVTRYIYNREEYLRFDSDVGEYRAVTELGRPDAEYYNKQYLERTRAELDTVCRYNYEETEVPTSLRRLEQPNVVISLSRTEALNHHNTLVCSVTDFYPAKIKVRWFRNGQEETVGVSSTQLIRNGDWTFQVLVMLEMTPRRGEVYTCHVEHPSLKSPITVEWRAQSESARSKMLSGIGGCVLGVIFLGLGLFIRHRSQKGPRGPPPAGLLQ</sequence>
<proteinExistence type="evidence at protein level"/>